<evidence type="ECO:0000255" key="1">
    <source>
        <dbReference type="HAMAP-Rule" id="MF_01318"/>
    </source>
</evidence>
<evidence type="ECO:0000305" key="2"/>
<protein>
    <recommendedName>
        <fullName evidence="1">Large ribosomal subunit protein uL1</fullName>
    </recommendedName>
    <alternativeName>
        <fullName evidence="2">50S ribosomal protein L1</fullName>
    </alternativeName>
</protein>
<proteinExistence type="inferred from homology"/>
<feature type="chain" id="PRO_0000125745" description="Large ribosomal subunit protein uL1">
    <location>
        <begin position="1"/>
        <end position="241"/>
    </location>
</feature>
<gene>
    <name evidence="1" type="primary">rplA</name>
    <name type="ordered locus">SCO4649</name>
    <name type="ORF">SCD82.20</name>
</gene>
<sequence length="241" mass="25764">MSKRSKSLRAADAKIDRDKLYAPLEAVRLAKETSTSKFDGTVEVAFRLGVDPRKADQMVRGTVNLPHGTGKTARVLVFATGDRAEAATAAGADIVGSDELIDEVSKGRLDFDAVVATPDLMGKVGRLGRVLGPRGLMPNPKTGTVTPDVAKAVNDIKGGKIEFRVDKHSNLHFIIGKTSFDDTKLVENYGAALEEILRLKPSAAKGRYIKKAALSTTMGPGIPLDSNRTRNLLVEEDPAAV</sequence>
<dbReference type="EMBL" id="AL939120">
    <property type="protein sequence ID" value="CAB77423.1"/>
    <property type="molecule type" value="Genomic_DNA"/>
</dbReference>
<dbReference type="EMBL" id="D32254">
    <property type="protein sequence ID" value="BAA22059.1"/>
    <property type="molecule type" value="Genomic_DNA"/>
</dbReference>
<dbReference type="PIR" id="S54719">
    <property type="entry name" value="S54719"/>
</dbReference>
<dbReference type="RefSeq" id="NP_628810.1">
    <property type="nucleotide sequence ID" value="NC_003888.3"/>
</dbReference>
<dbReference type="RefSeq" id="WP_003974314.1">
    <property type="nucleotide sequence ID" value="NZ_VNID01000028.1"/>
</dbReference>
<dbReference type="SMR" id="P48950"/>
<dbReference type="FunCoup" id="P48950">
    <property type="interactions" value="355"/>
</dbReference>
<dbReference type="STRING" id="100226.gene:17762298"/>
<dbReference type="PaxDb" id="100226-SCO4649"/>
<dbReference type="GeneID" id="91384383"/>
<dbReference type="KEGG" id="sco:SCO4649"/>
<dbReference type="PATRIC" id="fig|100226.15.peg.4720"/>
<dbReference type="eggNOG" id="COG0081">
    <property type="taxonomic scope" value="Bacteria"/>
</dbReference>
<dbReference type="HOGENOM" id="CLU_062853_0_0_11"/>
<dbReference type="InParanoid" id="P48950"/>
<dbReference type="OrthoDB" id="9803740at2"/>
<dbReference type="PhylomeDB" id="P48950"/>
<dbReference type="Proteomes" id="UP000001973">
    <property type="component" value="Chromosome"/>
</dbReference>
<dbReference type="GO" id="GO:0015934">
    <property type="term" value="C:large ribosomal subunit"/>
    <property type="evidence" value="ECO:0007669"/>
    <property type="project" value="InterPro"/>
</dbReference>
<dbReference type="GO" id="GO:0019843">
    <property type="term" value="F:rRNA binding"/>
    <property type="evidence" value="ECO:0007669"/>
    <property type="project" value="UniProtKB-UniRule"/>
</dbReference>
<dbReference type="GO" id="GO:0003735">
    <property type="term" value="F:structural constituent of ribosome"/>
    <property type="evidence" value="ECO:0007669"/>
    <property type="project" value="InterPro"/>
</dbReference>
<dbReference type="GO" id="GO:0000049">
    <property type="term" value="F:tRNA binding"/>
    <property type="evidence" value="ECO:0007669"/>
    <property type="project" value="UniProtKB-KW"/>
</dbReference>
<dbReference type="GO" id="GO:0006417">
    <property type="term" value="P:regulation of translation"/>
    <property type="evidence" value="ECO:0007669"/>
    <property type="project" value="UniProtKB-KW"/>
</dbReference>
<dbReference type="GO" id="GO:0006412">
    <property type="term" value="P:translation"/>
    <property type="evidence" value="ECO:0007669"/>
    <property type="project" value="UniProtKB-UniRule"/>
</dbReference>
<dbReference type="CDD" id="cd00403">
    <property type="entry name" value="Ribosomal_L1"/>
    <property type="match status" value="1"/>
</dbReference>
<dbReference type="FunFam" id="3.40.50.790:FF:000001">
    <property type="entry name" value="50S ribosomal protein L1"/>
    <property type="match status" value="1"/>
</dbReference>
<dbReference type="Gene3D" id="3.30.190.20">
    <property type="match status" value="1"/>
</dbReference>
<dbReference type="Gene3D" id="3.40.50.790">
    <property type="match status" value="1"/>
</dbReference>
<dbReference type="HAMAP" id="MF_01318_B">
    <property type="entry name" value="Ribosomal_uL1_B"/>
    <property type="match status" value="1"/>
</dbReference>
<dbReference type="InterPro" id="IPR005878">
    <property type="entry name" value="Ribosom_uL1_bac-type"/>
</dbReference>
<dbReference type="InterPro" id="IPR002143">
    <property type="entry name" value="Ribosomal_uL1"/>
</dbReference>
<dbReference type="InterPro" id="IPR023674">
    <property type="entry name" value="Ribosomal_uL1-like"/>
</dbReference>
<dbReference type="InterPro" id="IPR028364">
    <property type="entry name" value="Ribosomal_uL1/biogenesis"/>
</dbReference>
<dbReference type="InterPro" id="IPR016095">
    <property type="entry name" value="Ribosomal_uL1_3-a/b-sand"/>
</dbReference>
<dbReference type="InterPro" id="IPR023673">
    <property type="entry name" value="Ribosomal_uL1_CS"/>
</dbReference>
<dbReference type="NCBIfam" id="TIGR01169">
    <property type="entry name" value="rplA_bact"/>
    <property type="match status" value="1"/>
</dbReference>
<dbReference type="PANTHER" id="PTHR36427">
    <property type="entry name" value="54S RIBOSOMAL PROTEIN L1, MITOCHONDRIAL"/>
    <property type="match status" value="1"/>
</dbReference>
<dbReference type="PANTHER" id="PTHR36427:SF3">
    <property type="entry name" value="LARGE RIBOSOMAL SUBUNIT PROTEIN UL1M"/>
    <property type="match status" value="1"/>
</dbReference>
<dbReference type="Pfam" id="PF00687">
    <property type="entry name" value="Ribosomal_L1"/>
    <property type="match status" value="1"/>
</dbReference>
<dbReference type="PIRSF" id="PIRSF002155">
    <property type="entry name" value="Ribosomal_L1"/>
    <property type="match status" value="1"/>
</dbReference>
<dbReference type="SUPFAM" id="SSF56808">
    <property type="entry name" value="Ribosomal protein L1"/>
    <property type="match status" value="1"/>
</dbReference>
<dbReference type="PROSITE" id="PS01199">
    <property type="entry name" value="RIBOSOMAL_L1"/>
    <property type="match status" value="1"/>
</dbReference>
<name>RL1_STRCO</name>
<comment type="function">
    <text evidence="1">Binds directly to 23S rRNA. The L1 stalk is quite mobile in the ribosome, and is involved in E site tRNA release.</text>
</comment>
<comment type="function">
    <text evidence="1">Protein L1 is also a translational repressor protein, it controls the translation of the L11 operon by binding to its mRNA.</text>
</comment>
<comment type="subunit">
    <text evidence="1">Part of the 50S ribosomal subunit.</text>
</comment>
<comment type="similarity">
    <text evidence="1">Belongs to the universal ribosomal protein uL1 family.</text>
</comment>
<keyword id="KW-1185">Reference proteome</keyword>
<keyword id="KW-0678">Repressor</keyword>
<keyword id="KW-0687">Ribonucleoprotein</keyword>
<keyword id="KW-0689">Ribosomal protein</keyword>
<keyword id="KW-0694">RNA-binding</keyword>
<keyword id="KW-0699">rRNA-binding</keyword>
<keyword id="KW-0810">Translation regulation</keyword>
<keyword id="KW-0820">tRNA-binding</keyword>
<organism>
    <name type="scientific">Streptomyces coelicolor (strain ATCC BAA-471 / A3(2) / M145)</name>
    <dbReference type="NCBI Taxonomy" id="100226"/>
    <lineage>
        <taxon>Bacteria</taxon>
        <taxon>Bacillati</taxon>
        <taxon>Actinomycetota</taxon>
        <taxon>Actinomycetes</taxon>
        <taxon>Kitasatosporales</taxon>
        <taxon>Streptomycetaceae</taxon>
        <taxon>Streptomyces</taxon>
        <taxon>Streptomyces albidoflavus group</taxon>
    </lineage>
</organism>
<reference key="1">
    <citation type="journal article" date="2002" name="Nature">
        <title>Complete genome sequence of the model actinomycete Streptomyces coelicolor A3(2).</title>
        <authorList>
            <person name="Bentley S.D."/>
            <person name="Chater K.F."/>
            <person name="Cerdeno-Tarraga A.-M."/>
            <person name="Challis G.L."/>
            <person name="Thomson N.R."/>
            <person name="James K.D."/>
            <person name="Harris D.E."/>
            <person name="Quail M.A."/>
            <person name="Kieser H."/>
            <person name="Harper D."/>
            <person name="Bateman A."/>
            <person name="Brown S."/>
            <person name="Chandra G."/>
            <person name="Chen C.W."/>
            <person name="Collins M."/>
            <person name="Cronin A."/>
            <person name="Fraser A."/>
            <person name="Goble A."/>
            <person name="Hidalgo J."/>
            <person name="Hornsby T."/>
            <person name="Howarth S."/>
            <person name="Huang C.-H."/>
            <person name="Kieser T."/>
            <person name="Larke L."/>
            <person name="Murphy L.D."/>
            <person name="Oliver K."/>
            <person name="O'Neil S."/>
            <person name="Rabbinowitsch E."/>
            <person name="Rajandream M.A."/>
            <person name="Rutherford K.M."/>
            <person name="Rutter S."/>
            <person name="Seeger K."/>
            <person name="Saunders D."/>
            <person name="Sharp S."/>
            <person name="Squares R."/>
            <person name="Squares S."/>
            <person name="Taylor K."/>
            <person name="Warren T."/>
            <person name="Wietzorrek A."/>
            <person name="Woodward J.R."/>
            <person name="Barrell B.G."/>
            <person name="Parkhill J."/>
            <person name="Hopwood D.A."/>
        </authorList>
    </citation>
    <scope>NUCLEOTIDE SEQUENCE [LARGE SCALE GENOMIC DNA]</scope>
    <source>
        <strain>ATCC BAA-471 / A3(2) / M145</strain>
    </source>
</reference>
<reference key="2">
    <citation type="journal article" date="1995" name="Mol. Gen. Genet.">
        <title>Cloning, nucleotide sequence, and transcriptional analysis of the nusG gene of Streptomyces coelicolor A3(2), which encodes a putative transcriptional antiterminator.</title>
        <authorList>
            <person name="Puttikhunt C."/>
            <person name="Nihira T."/>
            <person name="Yamada Y."/>
        </authorList>
    </citation>
    <scope>NUCLEOTIDE SEQUENCE [GENOMIC DNA] OF 1-73</scope>
    <source>
        <strain>A3(2) / NRRL B-16638</strain>
    </source>
</reference>
<accession>P48950</accession>
<accession>Q9L0L2</accession>